<proteinExistence type="evidence at protein level"/>
<gene>
    <name type="primary">OPG119</name>
    <name type="synonym">RPO18</name>
    <name type="ORF">D7R</name>
</gene>
<accession>P21034</accession>
<evidence type="ECO:0000250" key="1">
    <source>
        <dbReference type="UniProtKB" id="P04310"/>
    </source>
</evidence>
<evidence type="ECO:0000250" key="2">
    <source>
        <dbReference type="UniProtKB" id="Q76ZS0"/>
    </source>
</evidence>
<evidence type="ECO:0000305" key="3"/>
<sequence length="161" mass="17901">MSSFVTNGYLSVTLEPHELTLDIKTNIRNAVYKTYLHREISGKMAKKIEIREDVELPLGEIVNNSVVINVPCVITYAYYHVGDIVRGTLNIEDESNVTIQCGDLICKLSRDSGTVSFSDSKYCFFRNGNAYDNGSEVTAVLMEAQQGIESSFVFLANIVDS</sequence>
<reference key="1">
    <citation type="journal article" date="1990" name="Virology">
        <title>The complete DNA sequence of vaccinia virus.</title>
        <authorList>
            <person name="Goebel S.J."/>
            <person name="Johnson G.P."/>
            <person name="Perkus M.E."/>
            <person name="Davis S.W."/>
            <person name="Winslow J.P."/>
            <person name="Paoletti E."/>
        </authorList>
    </citation>
    <scope>NUCLEOTIDE SEQUENCE [LARGE SCALE GENOMIC DNA]</scope>
</reference>
<reference key="2">
    <citation type="journal article" date="1990" name="Virology">
        <title>Appendix to 'The complete DNA sequence of vaccinia virus'.</title>
        <authorList>
            <person name="Goebel S.J."/>
            <person name="Johnson G.P."/>
            <person name="Perkus M.E."/>
            <person name="Davis S.W."/>
            <person name="Winslow J.P."/>
            <person name="Paoletti E."/>
        </authorList>
    </citation>
    <scope>NUCLEOTIDE SEQUENCE [LARGE SCALE GENOMIC DNA]</scope>
</reference>
<organism>
    <name type="scientific">Vaccinia virus (strain Copenhagen)</name>
    <name type="common">VACV</name>
    <dbReference type="NCBI Taxonomy" id="10249"/>
    <lineage>
        <taxon>Viruses</taxon>
        <taxon>Varidnaviria</taxon>
        <taxon>Bamfordvirae</taxon>
        <taxon>Nucleocytoviricota</taxon>
        <taxon>Pokkesviricetes</taxon>
        <taxon>Chitovirales</taxon>
        <taxon>Poxviridae</taxon>
        <taxon>Chordopoxvirinae</taxon>
        <taxon>Orthopoxvirus</taxon>
        <taxon>Vaccinia virus</taxon>
    </lineage>
</organism>
<protein>
    <recommendedName>
        <fullName>DNA-directed RNA polymerase 18 kDa subunit</fullName>
        <ecNumber>2.7.7.6</ecNumber>
    </recommendedName>
</protein>
<keyword id="KW-0002">3D-structure</keyword>
<keyword id="KW-0240">DNA-directed RNA polymerase</keyword>
<keyword id="KW-0244">Early protein</keyword>
<keyword id="KW-0548">Nucleotidyltransferase</keyword>
<keyword id="KW-1185">Reference proteome</keyword>
<keyword id="KW-0804">Transcription</keyword>
<keyword id="KW-0808">Transferase</keyword>
<keyword id="KW-0946">Virion</keyword>
<comment type="function">
    <text evidence="1">Part of the DNA-dependent RNA polymerase which catalyzes the transcription of viral DNA into RNA using the four ribonucleoside triphosphates as substrates. Responsible for the transcription of early, intermediate and late genes. DNA-dependent RNA polymerase associates with the early transcription factor (ETF), itself composed of OPG118 and OPG133, thereby allowing the early genes transcription. Late transcription, and probably also intermediate transcription, require newly synthesized RNA polymerase.</text>
</comment>
<comment type="catalytic activity">
    <reaction evidence="1">
        <text>RNA(n) + a ribonucleoside 5'-triphosphate = RNA(n+1) + diphosphate</text>
        <dbReference type="Rhea" id="RHEA:21248"/>
        <dbReference type="Rhea" id="RHEA-COMP:14527"/>
        <dbReference type="Rhea" id="RHEA-COMP:17342"/>
        <dbReference type="ChEBI" id="CHEBI:33019"/>
        <dbReference type="ChEBI" id="CHEBI:61557"/>
        <dbReference type="ChEBI" id="CHEBI:140395"/>
        <dbReference type="EC" id="2.7.7.6"/>
    </reaction>
</comment>
<comment type="subunit">
    <text evidence="2">The DNA-dependent RNA polymerase used for intermediate and late genes expression consists of eight subunits Rpo30/OPG66, Rpo7/OPG90, Rpo22/OPG103, Rpo147/OPG105, Rpo18/OPG119, Rpo19/OPG131, Rpo132/OPG151 and Rpo35/OPG156. The same holoenzyme, with the addition of the transcription-specificity factor OPG109, is used for early gene expression.</text>
</comment>
<comment type="subcellular location">
    <subcellularLocation>
        <location evidence="1">Virion</location>
    </subcellularLocation>
    <text evidence="1">All the enzymes and other proteins required to synthesize early mRNAs are packaged within the virion core along with the DNA genome. This is necessary because viral early mRNAs are synthesized within minutes after virus entry into the cell and are extruded through pores in the core particle.</text>
</comment>
<comment type="induction">
    <text>Expressed in the early phase of the viral replicative cycle.</text>
</comment>
<comment type="similarity">
    <text evidence="3">Belongs to the poxviridae DNA-directed RNA polymerase 18 kDa subunit family.</text>
</comment>
<dbReference type="EC" id="2.7.7.6"/>
<dbReference type="EMBL" id="M35027">
    <property type="protein sequence ID" value="AAA48106.1"/>
    <property type="molecule type" value="Genomic_DNA"/>
</dbReference>
<dbReference type="PIR" id="F42515">
    <property type="entry name" value="F42515"/>
</dbReference>
<dbReference type="PDB" id="8P0J">
    <property type="method" value="EM"/>
    <property type="resolution" value="2.39 A"/>
    <property type="chains" value="G=1-161"/>
</dbReference>
<dbReference type="PDB" id="8P0K">
    <property type="method" value="EM"/>
    <property type="resolution" value="2.64 A"/>
    <property type="chains" value="G=1-161"/>
</dbReference>
<dbReference type="PDB" id="8P0N">
    <property type="method" value="EM"/>
    <property type="resolution" value="2.58 A"/>
    <property type="chains" value="G=1-161"/>
</dbReference>
<dbReference type="PDB" id="8RQK">
    <property type="method" value="EM"/>
    <property type="resolution" value="2.65 A"/>
    <property type="chains" value="G=1-161"/>
</dbReference>
<dbReference type="PDBsum" id="8P0J"/>
<dbReference type="PDBsum" id="8P0K"/>
<dbReference type="PDBsum" id="8P0N"/>
<dbReference type="PDBsum" id="8RQK"/>
<dbReference type="EMDB" id="EMD-17334"/>
<dbReference type="EMDB" id="EMD-17335"/>
<dbReference type="EMDB" id="EMD-17336"/>
<dbReference type="EMDB" id="EMD-19442"/>
<dbReference type="SMR" id="P21034"/>
<dbReference type="Proteomes" id="UP000008269">
    <property type="component" value="Segment"/>
</dbReference>
<dbReference type="GO" id="GO:0000428">
    <property type="term" value="C:DNA-directed RNA polymerase complex"/>
    <property type="evidence" value="ECO:0007669"/>
    <property type="project" value="UniProtKB-KW"/>
</dbReference>
<dbReference type="GO" id="GO:0044423">
    <property type="term" value="C:virion component"/>
    <property type="evidence" value="ECO:0007669"/>
    <property type="project" value="UniProtKB-KW"/>
</dbReference>
<dbReference type="GO" id="GO:0003677">
    <property type="term" value="F:DNA binding"/>
    <property type="evidence" value="ECO:0007669"/>
    <property type="project" value="InterPro"/>
</dbReference>
<dbReference type="GO" id="GO:0003899">
    <property type="term" value="F:DNA-directed RNA polymerase activity"/>
    <property type="evidence" value="ECO:0007669"/>
    <property type="project" value="UniProtKB-EC"/>
</dbReference>
<dbReference type="GO" id="GO:0019083">
    <property type="term" value="P:viral transcription"/>
    <property type="evidence" value="ECO:0007669"/>
    <property type="project" value="InterPro"/>
</dbReference>
<dbReference type="InterPro" id="IPR004973">
    <property type="entry name" value="DNA-dir_RNA_pol_18kDa_poxviral"/>
</dbReference>
<dbReference type="Pfam" id="PF03293">
    <property type="entry name" value="Pox_RNA_pol"/>
    <property type="match status" value="1"/>
</dbReference>
<name>RP18_VACCC</name>
<organismHost>
    <name type="scientific">Homo sapiens</name>
    <name type="common">Human</name>
    <dbReference type="NCBI Taxonomy" id="9606"/>
</organismHost>
<feature type="chain" id="PRO_0000099151" description="DNA-directed RNA polymerase 18 kDa subunit">
    <location>
        <begin position="1"/>
        <end position="161"/>
    </location>
</feature>